<sequence>MADLSTLARPYAKAAFDYANENGAVNEWEDFLFVAATVVNDKSFSTWLDNPAVSAEHKSAALVDLYDTQVASANDSAFKQLLDANKGVRPDSNASYSKVSVAFSNFVKQLSEQERLALLPEVYEHYRRHKAVSLKQLDAYVTSAYPLTDDQRDMLQARLAASLNASVVIHESVDASLLAGVTIKVGDKVIDDSMRGKLQQLKTQLTA</sequence>
<reference key="1">
    <citation type="submission" date="2006-03" db="EMBL/GenBank/DDBJ databases">
        <title>Complete sequence of chromosome of Psychrobacter cryohalolentis K5.</title>
        <authorList>
            <consortium name="US DOE Joint Genome Institute"/>
            <person name="Copeland A."/>
            <person name="Lucas S."/>
            <person name="Lapidus A."/>
            <person name="Barry K."/>
            <person name="Detter J.C."/>
            <person name="Glavina T."/>
            <person name="Hammon N."/>
            <person name="Israni S."/>
            <person name="Dalin E."/>
            <person name="Tice H."/>
            <person name="Pitluck S."/>
            <person name="Brettin T."/>
            <person name="Bruce D."/>
            <person name="Han C."/>
            <person name="Tapia R."/>
            <person name="Sims D.R."/>
            <person name="Gilna P."/>
            <person name="Schmutz J."/>
            <person name="Larimer F."/>
            <person name="Land M."/>
            <person name="Hauser L."/>
            <person name="Kyrpides N."/>
            <person name="Kim E."/>
            <person name="Richardson P."/>
        </authorList>
    </citation>
    <scope>NUCLEOTIDE SEQUENCE [LARGE SCALE GENOMIC DNA]</scope>
    <source>
        <strain>ATCC BAA-1226 / DSM 17306 / VKM B-2378 / K5</strain>
    </source>
</reference>
<comment type="function">
    <text evidence="1">F(1)F(0) ATP synthase produces ATP from ADP in the presence of a proton or sodium gradient. F-type ATPases consist of two structural domains, F(1) containing the extramembraneous catalytic core and F(0) containing the membrane proton channel, linked together by a central stalk and a peripheral stalk. During catalysis, ATP synthesis in the catalytic domain of F(1) is coupled via a rotary mechanism of the central stalk subunits to proton translocation.</text>
</comment>
<comment type="function">
    <text evidence="1">This protein is part of the stalk that links CF(0) to CF(1). It either transmits conformational changes from CF(0) to CF(1) or is implicated in proton conduction.</text>
</comment>
<comment type="subunit">
    <text evidence="1">F-type ATPases have 2 components, F(1) - the catalytic core - and F(0) - the membrane proton channel. F(1) has five subunits: alpha(3), beta(3), gamma(1), delta(1), epsilon(1). F(0) has three main subunits: a(1), b(2) and c(10-14). The alpha and beta chains form an alternating ring which encloses part of the gamma chain. F(1) is attached to F(0) by a central stalk formed by the gamma and epsilon chains, while a peripheral stalk is formed by the delta and b chains.</text>
</comment>
<comment type="subcellular location">
    <subcellularLocation>
        <location evidence="1">Cell inner membrane</location>
        <topology evidence="1">Peripheral membrane protein</topology>
    </subcellularLocation>
</comment>
<comment type="similarity">
    <text evidence="1">Belongs to the ATPase delta chain family.</text>
</comment>
<proteinExistence type="inferred from homology"/>
<accession>Q1Q896</accession>
<organism>
    <name type="scientific">Psychrobacter cryohalolentis (strain ATCC BAA-1226 / DSM 17306 / VKM B-2378 / K5)</name>
    <dbReference type="NCBI Taxonomy" id="335284"/>
    <lineage>
        <taxon>Bacteria</taxon>
        <taxon>Pseudomonadati</taxon>
        <taxon>Pseudomonadota</taxon>
        <taxon>Gammaproteobacteria</taxon>
        <taxon>Moraxellales</taxon>
        <taxon>Moraxellaceae</taxon>
        <taxon>Psychrobacter</taxon>
    </lineage>
</organism>
<feature type="chain" id="PRO_0000371083" description="ATP synthase subunit delta">
    <location>
        <begin position="1"/>
        <end position="207"/>
    </location>
</feature>
<dbReference type="EMBL" id="CP000323">
    <property type="protein sequence ID" value="ABE76107.1"/>
    <property type="molecule type" value="Genomic_DNA"/>
</dbReference>
<dbReference type="RefSeq" id="WP_011514636.1">
    <property type="nucleotide sequence ID" value="NC_007969.1"/>
</dbReference>
<dbReference type="SMR" id="Q1Q896"/>
<dbReference type="STRING" id="335284.Pcryo_2330"/>
<dbReference type="KEGG" id="pcr:Pcryo_2330"/>
<dbReference type="eggNOG" id="COG0712">
    <property type="taxonomic scope" value="Bacteria"/>
</dbReference>
<dbReference type="HOGENOM" id="CLU_085114_3_0_6"/>
<dbReference type="Proteomes" id="UP000002425">
    <property type="component" value="Chromosome"/>
</dbReference>
<dbReference type="GO" id="GO:0005886">
    <property type="term" value="C:plasma membrane"/>
    <property type="evidence" value="ECO:0007669"/>
    <property type="project" value="UniProtKB-SubCell"/>
</dbReference>
<dbReference type="GO" id="GO:0045259">
    <property type="term" value="C:proton-transporting ATP synthase complex"/>
    <property type="evidence" value="ECO:0007669"/>
    <property type="project" value="UniProtKB-KW"/>
</dbReference>
<dbReference type="GO" id="GO:0046933">
    <property type="term" value="F:proton-transporting ATP synthase activity, rotational mechanism"/>
    <property type="evidence" value="ECO:0007669"/>
    <property type="project" value="UniProtKB-UniRule"/>
</dbReference>
<dbReference type="Gene3D" id="1.10.520.20">
    <property type="entry name" value="N-terminal domain of the delta subunit of the F1F0-ATP synthase"/>
    <property type="match status" value="1"/>
</dbReference>
<dbReference type="HAMAP" id="MF_01416">
    <property type="entry name" value="ATP_synth_delta_bact"/>
    <property type="match status" value="1"/>
</dbReference>
<dbReference type="InterPro" id="IPR026015">
    <property type="entry name" value="ATP_synth_OSCP/delta_N_sf"/>
</dbReference>
<dbReference type="InterPro" id="IPR020781">
    <property type="entry name" value="ATPase_OSCP/d_CS"/>
</dbReference>
<dbReference type="InterPro" id="IPR000711">
    <property type="entry name" value="ATPase_OSCP/dsu"/>
</dbReference>
<dbReference type="NCBIfam" id="TIGR01145">
    <property type="entry name" value="ATP_synt_delta"/>
    <property type="match status" value="1"/>
</dbReference>
<dbReference type="NCBIfam" id="NF004402">
    <property type="entry name" value="PRK05758.2-2"/>
    <property type="match status" value="1"/>
</dbReference>
<dbReference type="PANTHER" id="PTHR11910">
    <property type="entry name" value="ATP SYNTHASE DELTA CHAIN"/>
    <property type="match status" value="1"/>
</dbReference>
<dbReference type="Pfam" id="PF00213">
    <property type="entry name" value="OSCP"/>
    <property type="match status" value="2"/>
</dbReference>
<dbReference type="SUPFAM" id="SSF47928">
    <property type="entry name" value="N-terminal domain of the delta subunit of the F1F0-ATP synthase"/>
    <property type="match status" value="1"/>
</dbReference>
<dbReference type="PROSITE" id="PS00389">
    <property type="entry name" value="ATPASE_DELTA"/>
    <property type="match status" value="1"/>
</dbReference>
<protein>
    <recommendedName>
        <fullName evidence="1">ATP synthase subunit delta</fullName>
    </recommendedName>
    <alternativeName>
        <fullName evidence="1">ATP synthase F(1) sector subunit delta</fullName>
    </alternativeName>
    <alternativeName>
        <fullName evidence="1">F-type ATPase subunit delta</fullName>
        <shortName evidence="1">F-ATPase subunit delta</shortName>
    </alternativeName>
</protein>
<name>ATPD_PSYCK</name>
<keyword id="KW-0066">ATP synthesis</keyword>
<keyword id="KW-0997">Cell inner membrane</keyword>
<keyword id="KW-1003">Cell membrane</keyword>
<keyword id="KW-0139">CF(1)</keyword>
<keyword id="KW-0375">Hydrogen ion transport</keyword>
<keyword id="KW-0406">Ion transport</keyword>
<keyword id="KW-0472">Membrane</keyword>
<keyword id="KW-0813">Transport</keyword>
<evidence type="ECO:0000255" key="1">
    <source>
        <dbReference type="HAMAP-Rule" id="MF_01416"/>
    </source>
</evidence>
<gene>
    <name evidence="1" type="primary">atpH</name>
    <name type="ordered locus">Pcryo_2330</name>
</gene>